<sequence>MAKKSMIAKQKRTPKFKVQEYTRCERCGRPHSVYRKFKLCRICFRELAYKGQIPGVKKASW</sequence>
<reference key="1">
    <citation type="submission" date="2009-04" db="EMBL/GenBank/DDBJ databases">
        <title>Genome sequence of Bacillus anthracis A0248.</title>
        <authorList>
            <person name="Dodson R.J."/>
            <person name="Munk A.C."/>
            <person name="Bruce D."/>
            <person name="Detter C."/>
            <person name="Tapia R."/>
            <person name="Sutton G."/>
            <person name="Sims D."/>
            <person name="Brettin T."/>
        </authorList>
    </citation>
    <scope>NUCLEOTIDE SEQUENCE [LARGE SCALE GENOMIC DNA]</scope>
    <source>
        <strain>A0248</strain>
    </source>
</reference>
<comment type="function">
    <text evidence="1">Binds 16S rRNA, required for the assembly of 30S particles and may also be responsible for determining the conformation of the 16S rRNA at the A site.</text>
</comment>
<comment type="cofactor">
    <cofactor evidence="1">
        <name>Zn(2+)</name>
        <dbReference type="ChEBI" id="CHEBI:29105"/>
    </cofactor>
    <text evidence="1">Binds 1 zinc ion per subunit.</text>
</comment>
<comment type="subunit">
    <text evidence="1">Part of the 30S ribosomal subunit. Contacts proteins S3 and S10.</text>
</comment>
<comment type="similarity">
    <text evidence="1">Belongs to the universal ribosomal protein uS14 family. Zinc-binding uS14 subfamily.</text>
</comment>
<gene>
    <name evidence="1" type="primary">rpsZ</name>
    <name evidence="1" type="synonym">rpsN</name>
    <name type="ordered locus">BAA_0139</name>
</gene>
<keyword id="KW-0479">Metal-binding</keyword>
<keyword id="KW-0687">Ribonucleoprotein</keyword>
<keyword id="KW-0689">Ribosomal protein</keyword>
<keyword id="KW-0694">RNA-binding</keyword>
<keyword id="KW-0699">rRNA-binding</keyword>
<keyword id="KW-0862">Zinc</keyword>
<organism>
    <name type="scientific">Bacillus anthracis (strain A0248)</name>
    <dbReference type="NCBI Taxonomy" id="592021"/>
    <lineage>
        <taxon>Bacteria</taxon>
        <taxon>Bacillati</taxon>
        <taxon>Bacillota</taxon>
        <taxon>Bacilli</taxon>
        <taxon>Bacillales</taxon>
        <taxon>Bacillaceae</taxon>
        <taxon>Bacillus</taxon>
        <taxon>Bacillus cereus group</taxon>
    </lineage>
</organism>
<accession>C3P9R8</accession>
<proteinExistence type="inferred from homology"/>
<protein>
    <recommendedName>
        <fullName evidence="1">Small ribosomal subunit protein uS14</fullName>
    </recommendedName>
    <alternativeName>
        <fullName evidence="2">30S ribosomal protein S14 type Z</fullName>
    </alternativeName>
</protein>
<evidence type="ECO:0000255" key="1">
    <source>
        <dbReference type="HAMAP-Rule" id="MF_01364"/>
    </source>
</evidence>
<evidence type="ECO:0000305" key="2"/>
<name>RS14Z_BACAA</name>
<dbReference type="EMBL" id="CP001598">
    <property type="protein sequence ID" value="ACQ50900.1"/>
    <property type="molecule type" value="Genomic_DNA"/>
</dbReference>
<dbReference type="RefSeq" id="WP_001085700.1">
    <property type="nucleotide sequence ID" value="NC_012659.1"/>
</dbReference>
<dbReference type="SMR" id="C3P9R8"/>
<dbReference type="GeneID" id="93010930"/>
<dbReference type="KEGG" id="bai:BAA_0139"/>
<dbReference type="HOGENOM" id="CLU_139869_3_0_9"/>
<dbReference type="GO" id="GO:0015935">
    <property type="term" value="C:small ribosomal subunit"/>
    <property type="evidence" value="ECO:0007669"/>
    <property type="project" value="TreeGrafter"/>
</dbReference>
<dbReference type="GO" id="GO:0019843">
    <property type="term" value="F:rRNA binding"/>
    <property type="evidence" value="ECO:0007669"/>
    <property type="project" value="UniProtKB-UniRule"/>
</dbReference>
<dbReference type="GO" id="GO:0003735">
    <property type="term" value="F:structural constituent of ribosome"/>
    <property type="evidence" value="ECO:0007669"/>
    <property type="project" value="InterPro"/>
</dbReference>
<dbReference type="GO" id="GO:0008270">
    <property type="term" value="F:zinc ion binding"/>
    <property type="evidence" value="ECO:0007669"/>
    <property type="project" value="UniProtKB-UniRule"/>
</dbReference>
<dbReference type="GO" id="GO:0006412">
    <property type="term" value="P:translation"/>
    <property type="evidence" value="ECO:0007669"/>
    <property type="project" value="UniProtKB-UniRule"/>
</dbReference>
<dbReference type="FunFam" id="4.10.830.10:FF:000001">
    <property type="entry name" value="30S ribosomal protein S14 type Z"/>
    <property type="match status" value="1"/>
</dbReference>
<dbReference type="Gene3D" id="4.10.830.10">
    <property type="entry name" value="30s Ribosomal Protein S14, Chain N"/>
    <property type="match status" value="1"/>
</dbReference>
<dbReference type="HAMAP" id="MF_01364_B">
    <property type="entry name" value="Ribosomal_uS14_2_B"/>
    <property type="match status" value="1"/>
</dbReference>
<dbReference type="InterPro" id="IPR001209">
    <property type="entry name" value="Ribosomal_uS14"/>
</dbReference>
<dbReference type="InterPro" id="IPR023053">
    <property type="entry name" value="Ribosomal_uS14_bact"/>
</dbReference>
<dbReference type="InterPro" id="IPR018271">
    <property type="entry name" value="Ribosomal_uS14_CS"/>
</dbReference>
<dbReference type="InterPro" id="IPR043140">
    <property type="entry name" value="Ribosomal_uS14_sf"/>
</dbReference>
<dbReference type="NCBIfam" id="NF005974">
    <property type="entry name" value="PRK08061.1"/>
    <property type="match status" value="1"/>
</dbReference>
<dbReference type="PANTHER" id="PTHR19836">
    <property type="entry name" value="30S RIBOSOMAL PROTEIN S14"/>
    <property type="match status" value="1"/>
</dbReference>
<dbReference type="PANTHER" id="PTHR19836:SF26">
    <property type="entry name" value="SMALL RIBOSOMAL SUBUNIT PROTEIN US14B"/>
    <property type="match status" value="1"/>
</dbReference>
<dbReference type="Pfam" id="PF00253">
    <property type="entry name" value="Ribosomal_S14"/>
    <property type="match status" value="1"/>
</dbReference>
<dbReference type="SUPFAM" id="SSF57716">
    <property type="entry name" value="Glucocorticoid receptor-like (DNA-binding domain)"/>
    <property type="match status" value="1"/>
</dbReference>
<dbReference type="PROSITE" id="PS00527">
    <property type="entry name" value="RIBOSOMAL_S14"/>
    <property type="match status" value="1"/>
</dbReference>
<feature type="chain" id="PRO_1000166755" description="Small ribosomal subunit protein uS14">
    <location>
        <begin position="1"/>
        <end position="61"/>
    </location>
</feature>
<feature type="binding site" evidence="1">
    <location>
        <position position="24"/>
    </location>
    <ligand>
        <name>Zn(2+)</name>
        <dbReference type="ChEBI" id="CHEBI:29105"/>
    </ligand>
</feature>
<feature type="binding site" evidence="1">
    <location>
        <position position="27"/>
    </location>
    <ligand>
        <name>Zn(2+)</name>
        <dbReference type="ChEBI" id="CHEBI:29105"/>
    </ligand>
</feature>
<feature type="binding site" evidence="1">
    <location>
        <position position="40"/>
    </location>
    <ligand>
        <name>Zn(2+)</name>
        <dbReference type="ChEBI" id="CHEBI:29105"/>
    </ligand>
</feature>
<feature type="binding site" evidence="1">
    <location>
        <position position="43"/>
    </location>
    <ligand>
        <name>Zn(2+)</name>
        <dbReference type="ChEBI" id="CHEBI:29105"/>
    </ligand>
</feature>